<comment type="function">
    <text evidence="1">Together with the chaperonin GroEL, plays an essential role in assisting protein folding. The GroEL-GroES system forms a nano-cage that allows encapsulation of the non-native substrate proteins and provides a physical environment optimized to promote and accelerate protein folding. GroES binds to the apical surface of the GroEL ring, thereby capping the opening of the GroEL channel.</text>
</comment>
<comment type="subunit">
    <text evidence="1">Heptamer of 7 subunits arranged in a ring. Interacts with the chaperonin GroEL.</text>
</comment>
<comment type="subcellular location">
    <subcellularLocation>
        <location evidence="1">Cytoplasm</location>
    </subcellularLocation>
</comment>
<comment type="similarity">
    <text evidence="1">Belongs to the GroES chaperonin family.</text>
</comment>
<sequence length="93" mass="10040">MLKPLGDRVIVEVVEEEEQTVGGIVLANNAKQKPQTGKVVAVGEGALTPEGKRLPMAVKVGDTVLYDKYAGSEVKYEGQDYLVLHEKDIMAIA</sequence>
<dbReference type="EMBL" id="CP000423">
    <property type="protein sequence ID" value="ABJ70984.1"/>
    <property type="molecule type" value="Genomic_DNA"/>
</dbReference>
<dbReference type="RefSeq" id="WP_003567052.1">
    <property type="nucleotide sequence ID" value="NC_008526.1"/>
</dbReference>
<dbReference type="RefSeq" id="YP_807426.1">
    <property type="nucleotide sequence ID" value="NC_008526.1"/>
</dbReference>
<dbReference type="SMR" id="Q035Y8"/>
<dbReference type="STRING" id="321967.LSEI_2239"/>
<dbReference type="PaxDb" id="321967-LSEI_2239"/>
<dbReference type="GeneID" id="93269833"/>
<dbReference type="KEGG" id="lca:LSEI_2239"/>
<dbReference type="PATRIC" id="fig|321967.11.peg.2201"/>
<dbReference type="HOGENOM" id="CLU_132825_2_1_9"/>
<dbReference type="PRO" id="PR:Q035Y8"/>
<dbReference type="Proteomes" id="UP000001651">
    <property type="component" value="Chromosome"/>
</dbReference>
<dbReference type="GO" id="GO:0005737">
    <property type="term" value="C:cytoplasm"/>
    <property type="evidence" value="ECO:0007669"/>
    <property type="project" value="UniProtKB-SubCell"/>
</dbReference>
<dbReference type="GO" id="GO:0005524">
    <property type="term" value="F:ATP binding"/>
    <property type="evidence" value="ECO:0007669"/>
    <property type="project" value="InterPro"/>
</dbReference>
<dbReference type="GO" id="GO:0046872">
    <property type="term" value="F:metal ion binding"/>
    <property type="evidence" value="ECO:0007669"/>
    <property type="project" value="TreeGrafter"/>
</dbReference>
<dbReference type="GO" id="GO:0044183">
    <property type="term" value="F:protein folding chaperone"/>
    <property type="evidence" value="ECO:0007669"/>
    <property type="project" value="InterPro"/>
</dbReference>
<dbReference type="GO" id="GO:0051087">
    <property type="term" value="F:protein-folding chaperone binding"/>
    <property type="evidence" value="ECO:0007669"/>
    <property type="project" value="TreeGrafter"/>
</dbReference>
<dbReference type="GO" id="GO:0051082">
    <property type="term" value="F:unfolded protein binding"/>
    <property type="evidence" value="ECO:0007669"/>
    <property type="project" value="TreeGrafter"/>
</dbReference>
<dbReference type="GO" id="GO:0051085">
    <property type="term" value="P:chaperone cofactor-dependent protein refolding"/>
    <property type="evidence" value="ECO:0007669"/>
    <property type="project" value="TreeGrafter"/>
</dbReference>
<dbReference type="CDD" id="cd00320">
    <property type="entry name" value="cpn10"/>
    <property type="match status" value="1"/>
</dbReference>
<dbReference type="FunFam" id="2.30.33.40:FF:000001">
    <property type="entry name" value="10 kDa chaperonin"/>
    <property type="match status" value="1"/>
</dbReference>
<dbReference type="Gene3D" id="2.30.33.40">
    <property type="entry name" value="GroES chaperonin"/>
    <property type="match status" value="1"/>
</dbReference>
<dbReference type="HAMAP" id="MF_00580">
    <property type="entry name" value="CH10"/>
    <property type="match status" value="1"/>
</dbReference>
<dbReference type="InterPro" id="IPR020818">
    <property type="entry name" value="Chaperonin_GroES"/>
</dbReference>
<dbReference type="InterPro" id="IPR037124">
    <property type="entry name" value="Chaperonin_GroES_sf"/>
</dbReference>
<dbReference type="InterPro" id="IPR018369">
    <property type="entry name" value="Chaprnonin_Cpn10_CS"/>
</dbReference>
<dbReference type="InterPro" id="IPR011032">
    <property type="entry name" value="GroES-like_sf"/>
</dbReference>
<dbReference type="NCBIfam" id="NF001531">
    <property type="entry name" value="PRK00364.2-2"/>
    <property type="match status" value="1"/>
</dbReference>
<dbReference type="NCBIfam" id="NF001533">
    <property type="entry name" value="PRK00364.2-4"/>
    <property type="match status" value="1"/>
</dbReference>
<dbReference type="NCBIfam" id="NF001534">
    <property type="entry name" value="PRK00364.2-5"/>
    <property type="match status" value="1"/>
</dbReference>
<dbReference type="PANTHER" id="PTHR10772">
    <property type="entry name" value="10 KDA HEAT SHOCK PROTEIN"/>
    <property type="match status" value="1"/>
</dbReference>
<dbReference type="PANTHER" id="PTHR10772:SF58">
    <property type="entry name" value="CO-CHAPERONIN GROES"/>
    <property type="match status" value="1"/>
</dbReference>
<dbReference type="Pfam" id="PF00166">
    <property type="entry name" value="Cpn10"/>
    <property type="match status" value="1"/>
</dbReference>
<dbReference type="PRINTS" id="PR00297">
    <property type="entry name" value="CHAPERONIN10"/>
</dbReference>
<dbReference type="SMART" id="SM00883">
    <property type="entry name" value="Cpn10"/>
    <property type="match status" value="1"/>
</dbReference>
<dbReference type="SUPFAM" id="SSF50129">
    <property type="entry name" value="GroES-like"/>
    <property type="match status" value="1"/>
</dbReference>
<dbReference type="PROSITE" id="PS00681">
    <property type="entry name" value="CHAPERONINS_CPN10"/>
    <property type="match status" value="1"/>
</dbReference>
<keyword id="KW-0143">Chaperone</keyword>
<keyword id="KW-0963">Cytoplasm</keyword>
<keyword id="KW-1185">Reference proteome</keyword>
<proteinExistence type="inferred from homology"/>
<reference key="1">
    <citation type="journal article" date="2006" name="Proc. Natl. Acad. Sci. U.S.A.">
        <title>Comparative genomics of the lactic acid bacteria.</title>
        <authorList>
            <person name="Makarova K.S."/>
            <person name="Slesarev A."/>
            <person name="Wolf Y.I."/>
            <person name="Sorokin A."/>
            <person name="Mirkin B."/>
            <person name="Koonin E.V."/>
            <person name="Pavlov A."/>
            <person name="Pavlova N."/>
            <person name="Karamychev V."/>
            <person name="Polouchine N."/>
            <person name="Shakhova V."/>
            <person name="Grigoriev I."/>
            <person name="Lou Y."/>
            <person name="Rohksar D."/>
            <person name="Lucas S."/>
            <person name="Huang K."/>
            <person name="Goodstein D.M."/>
            <person name="Hawkins T."/>
            <person name="Plengvidhya V."/>
            <person name="Welker D."/>
            <person name="Hughes J."/>
            <person name="Goh Y."/>
            <person name="Benson A."/>
            <person name="Baldwin K."/>
            <person name="Lee J.-H."/>
            <person name="Diaz-Muniz I."/>
            <person name="Dosti B."/>
            <person name="Smeianov V."/>
            <person name="Wechter W."/>
            <person name="Barabote R."/>
            <person name="Lorca G."/>
            <person name="Altermann E."/>
            <person name="Barrangou R."/>
            <person name="Ganesan B."/>
            <person name="Xie Y."/>
            <person name="Rawsthorne H."/>
            <person name="Tamir D."/>
            <person name="Parker C."/>
            <person name="Breidt F."/>
            <person name="Broadbent J.R."/>
            <person name="Hutkins R."/>
            <person name="O'Sullivan D."/>
            <person name="Steele J."/>
            <person name="Unlu G."/>
            <person name="Saier M.H. Jr."/>
            <person name="Klaenhammer T."/>
            <person name="Richardson P."/>
            <person name="Kozyavkin S."/>
            <person name="Weimer B.C."/>
            <person name="Mills D.A."/>
        </authorList>
    </citation>
    <scope>NUCLEOTIDE SEQUENCE [LARGE SCALE GENOMIC DNA]</scope>
    <source>
        <strain>ATCC 334 / BCRC 17002 / CCUG 31169 / CIP 107868 / KCTC 3260 / NRRL B-441</strain>
    </source>
</reference>
<evidence type="ECO:0000255" key="1">
    <source>
        <dbReference type="HAMAP-Rule" id="MF_00580"/>
    </source>
</evidence>
<protein>
    <recommendedName>
        <fullName evidence="1">Co-chaperonin GroES</fullName>
    </recommendedName>
    <alternativeName>
        <fullName evidence="1">10 kDa chaperonin</fullName>
    </alternativeName>
    <alternativeName>
        <fullName evidence="1">Chaperonin-10</fullName>
        <shortName evidence="1">Cpn10</shortName>
    </alternativeName>
</protein>
<name>CH10_LACP3</name>
<accession>Q035Y8</accession>
<feature type="chain" id="PRO_1000025281" description="Co-chaperonin GroES">
    <location>
        <begin position="1"/>
        <end position="93"/>
    </location>
</feature>
<gene>
    <name evidence="1" type="primary">groES</name>
    <name evidence="1" type="synonym">groS</name>
    <name type="ordered locus">LSEI_2239</name>
</gene>
<organism>
    <name type="scientific">Lacticaseibacillus paracasei (strain ATCC 334 / BCRC 17002 / CCUG 31169 / CIP 107868 / KCTC 3260 / NRRL B-441)</name>
    <name type="common">Lactobacillus paracasei</name>
    <dbReference type="NCBI Taxonomy" id="321967"/>
    <lineage>
        <taxon>Bacteria</taxon>
        <taxon>Bacillati</taxon>
        <taxon>Bacillota</taxon>
        <taxon>Bacilli</taxon>
        <taxon>Lactobacillales</taxon>
        <taxon>Lactobacillaceae</taxon>
        <taxon>Lacticaseibacillus</taxon>
    </lineage>
</organism>